<dbReference type="EC" id="2.3.1.51" evidence="3"/>
<dbReference type="EC" id="2.3.1.n4" evidence="3"/>
<dbReference type="EMBL" id="AF111161">
    <property type="protein sequence ID" value="AAF73736.1"/>
    <property type="molecule type" value="mRNA"/>
</dbReference>
<dbReference type="EMBL" id="HQ141075">
    <property type="protein sequence ID" value="AEE01048.1"/>
    <property type="molecule type" value="mRNA"/>
</dbReference>
<dbReference type="EMBL" id="LK032443">
    <property type="protein sequence ID" value="CDY39220.1"/>
    <property type="status" value="ALT_INIT"/>
    <property type="molecule type" value="Genomic_DNA"/>
</dbReference>
<dbReference type="RefSeq" id="NP_001302928.1">
    <property type="nucleotide sequence ID" value="NM_001315999.1"/>
</dbReference>
<dbReference type="SMR" id="Q9LLY4"/>
<dbReference type="STRING" id="3708.Q9LLY4"/>
<dbReference type="PaxDb" id="3708-Q9LLY4"/>
<dbReference type="GeneID" id="106441094"/>
<dbReference type="KEGG" id="bna:106441094"/>
<dbReference type="OrthoDB" id="417078at2759"/>
<dbReference type="BRENDA" id="2.3.1.51">
    <property type="organism ID" value="944"/>
</dbReference>
<dbReference type="UniPathway" id="UPA00557">
    <property type="reaction ID" value="UER00613"/>
</dbReference>
<dbReference type="Proteomes" id="UP000028999">
    <property type="component" value="Unassembled WGS sequence"/>
</dbReference>
<dbReference type="GO" id="GO:0031969">
    <property type="term" value="C:chloroplast membrane"/>
    <property type="evidence" value="ECO:0000314"/>
    <property type="project" value="UniProtKB"/>
</dbReference>
<dbReference type="GO" id="GO:0003841">
    <property type="term" value="F:1-acylglycerol-3-phosphate O-acyltransferase activity"/>
    <property type="evidence" value="ECO:0000314"/>
    <property type="project" value="UniProtKB"/>
</dbReference>
<dbReference type="GO" id="GO:0016024">
    <property type="term" value="P:CDP-diacylglycerol biosynthetic process"/>
    <property type="evidence" value="ECO:0000314"/>
    <property type="project" value="UniProtKB"/>
</dbReference>
<dbReference type="GO" id="GO:0006654">
    <property type="term" value="P:phosphatidic acid biosynthetic process"/>
    <property type="evidence" value="ECO:0000318"/>
    <property type="project" value="GO_Central"/>
</dbReference>
<dbReference type="CDD" id="cd07989">
    <property type="entry name" value="LPLAT_AGPAT-like"/>
    <property type="match status" value="1"/>
</dbReference>
<dbReference type="InterPro" id="IPR004552">
    <property type="entry name" value="AGP_acyltrans"/>
</dbReference>
<dbReference type="InterPro" id="IPR002123">
    <property type="entry name" value="Plipid/glycerol_acylTrfase"/>
</dbReference>
<dbReference type="NCBIfam" id="TIGR00530">
    <property type="entry name" value="AGP_acyltrn"/>
    <property type="match status" value="1"/>
</dbReference>
<dbReference type="PANTHER" id="PTHR10434">
    <property type="entry name" value="1-ACYL-SN-GLYCEROL-3-PHOSPHATE ACYLTRANSFERASE"/>
    <property type="match status" value="1"/>
</dbReference>
<dbReference type="PANTHER" id="PTHR10434:SF60">
    <property type="entry name" value="1-ACYL-SN-GLYCEROL-3-PHOSPHATE ACYLTRANSFERASE LPAT1, CHLOROPLASTIC"/>
    <property type="match status" value="1"/>
</dbReference>
<dbReference type="Pfam" id="PF01553">
    <property type="entry name" value="Acyltransferase"/>
    <property type="match status" value="1"/>
</dbReference>
<dbReference type="SMART" id="SM00563">
    <property type="entry name" value="PlsC"/>
    <property type="match status" value="1"/>
</dbReference>
<dbReference type="SUPFAM" id="SSF69593">
    <property type="entry name" value="Glycerol-3-phosphate (1)-acyltransferase"/>
    <property type="match status" value="1"/>
</dbReference>
<gene>
    <name evidence="4" type="primary">BAT2</name>
    <name evidence="6" type="synonym">ACT2</name>
    <name evidence="5" type="synonym">LPAT1</name>
    <name evidence="7" type="ORF">BnaA03g50320D</name>
    <name evidence="7" type="ORF">GSBRNA2T00067440001</name>
</gene>
<feature type="transit peptide" description="Chloroplast" evidence="2">
    <location>
        <begin position="1"/>
        <end position="49"/>
    </location>
</feature>
<feature type="chain" id="PRO_0000024702" description="1-acyl-sn-glycerol-3-phosphate acyltransferase BAT2, chloroplastic">
    <location>
        <begin position="50"/>
        <end position="344"/>
    </location>
</feature>
<feature type="transmembrane region" description="Helical" evidence="2">
    <location>
        <begin position="113"/>
        <end position="133"/>
    </location>
</feature>
<feature type="transmembrane region" description="Helical" evidence="2">
    <location>
        <begin position="210"/>
        <end position="230"/>
    </location>
</feature>
<feature type="short sequence motif" description="HXXXXD motif" evidence="5">
    <location>
        <begin position="188"/>
        <end position="193"/>
    </location>
</feature>
<feature type="sequence conflict" description="In Ref. 1; AAF73736 and 2; AEE01048." ref="1 2">
    <original>P</original>
    <variation>R</variation>
    <location>
        <position position="7"/>
    </location>
</feature>
<feature type="sequence conflict" description="In Ref. 1; AAF73736 and 2; AEE01048." ref="1 2">
    <original>N</original>
    <variation>S</variation>
    <location>
        <position position="33"/>
    </location>
</feature>
<feature type="sequence conflict" description="In Ref. 1; AAF73736 and 2; AEE01048." ref="1 2">
    <original>V</original>
    <variation>I</variation>
    <location>
        <position position="122"/>
    </location>
</feature>
<feature type="sequence conflict" description="In Ref. 1; AAF73736 and 2; AEE01048." ref="1 2">
    <original>T</original>
    <variation>I</variation>
    <location>
        <position position="133"/>
    </location>
</feature>
<feature type="sequence conflict" description="In Ref. 1; AAF73736 and 2; AEE01048." ref="1 2">
    <original>LLCD</original>
    <variation>VLCE</variation>
    <location>
        <begin position="327"/>
        <end position="330"/>
    </location>
</feature>
<feature type="sequence conflict" description="In Ref. 1; AAF73736 and 2; AEE01048." ref="1 2">
    <original>V</original>
    <variation>L</variation>
    <location>
        <position position="343"/>
    </location>
</feature>
<accession>Q9LLY4</accession>
<accession>A0A078HL73</accession>
<accession>F4ZL18</accession>
<evidence type="ECO:0000250" key="1">
    <source>
        <dbReference type="UniProtKB" id="Q9D517"/>
    </source>
</evidence>
<evidence type="ECO:0000255" key="2"/>
<evidence type="ECO:0000269" key="3">
    <source>
    </source>
</evidence>
<evidence type="ECO:0000303" key="4">
    <source>
    </source>
</evidence>
<evidence type="ECO:0000305" key="5"/>
<evidence type="ECO:0000312" key="6">
    <source>
        <dbReference type="EMBL" id="AAF73736.1"/>
    </source>
</evidence>
<evidence type="ECO:0000312" key="7">
    <source>
        <dbReference type="EMBL" id="CDY39220.1"/>
    </source>
</evidence>
<organism>
    <name type="scientific">Brassica napus</name>
    <name type="common">Rape</name>
    <dbReference type="NCBI Taxonomy" id="3708"/>
    <lineage>
        <taxon>Eukaryota</taxon>
        <taxon>Viridiplantae</taxon>
        <taxon>Streptophyta</taxon>
        <taxon>Embryophyta</taxon>
        <taxon>Tracheophyta</taxon>
        <taxon>Spermatophyta</taxon>
        <taxon>Magnoliopsida</taxon>
        <taxon>eudicotyledons</taxon>
        <taxon>Gunneridae</taxon>
        <taxon>Pentapetalae</taxon>
        <taxon>rosids</taxon>
        <taxon>malvids</taxon>
        <taxon>Brassicales</taxon>
        <taxon>Brassicaceae</taxon>
        <taxon>Brassiceae</taxon>
        <taxon>Brassica</taxon>
    </lineage>
</organism>
<proteinExistence type="evidence at protein level"/>
<name>LPAT1_BRANA</name>
<comment type="function">
    <text evidence="3">Plastidial enzyme of the prokaryotic glycerol-3-phosphate pathway that converts lysophosphatidic acid (LPA) into phosphatidic acid by incorporating an acyl moiety at position sn-2 (PubMed:10398728). Utilizes palmitoyl-ACP (16:0-ACP) to produce phosphatidic acid containing a saturated group at position sn-2, which is characteristic of lipids synthesized by the prokaryotic pathway (PubMed:10398728). In vitro, can use 16:0-CoA as acyl donor (PubMed:10398728).</text>
</comment>
<comment type="catalytic activity">
    <reaction evidence="3">
        <text>a fatty acyl-[ACP] + a 1-acyl-sn-glycero-3-phosphate = a 1,2-diacyl-sn-glycero-3-phosphate + holo-[ACP]</text>
        <dbReference type="Rhea" id="RHEA:42296"/>
        <dbReference type="Rhea" id="RHEA-COMP:9685"/>
        <dbReference type="Rhea" id="RHEA-COMP:14125"/>
        <dbReference type="ChEBI" id="CHEBI:57970"/>
        <dbReference type="ChEBI" id="CHEBI:58608"/>
        <dbReference type="ChEBI" id="CHEBI:64479"/>
        <dbReference type="ChEBI" id="CHEBI:138651"/>
        <dbReference type="EC" id="2.3.1.n4"/>
    </reaction>
    <physiologicalReaction direction="left-to-right" evidence="5">
        <dbReference type="Rhea" id="RHEA:42297"/>
    </physiologicalReaction>
</comment>
<comment type="catalytic activity">
    <reaction evidence="3">
        <text>a 1-acyl-sn-glycero-3-phosphate + an acyl-CoA = a 1,2-diacyl-sn-glycero-3-phosphate + CoA</text>
        <dbReference type="Rhea" id="RHEA:19709"/>
        <dbReference type="ChEBI" id="CHEBI:57287"/>
        <dbReference type="ChEBI" id="CHEBI:57970"/>
        <dbReference type="ChEBI" id="CHEBI:58342"/>
        <dbReference type="ChEBI" id="CHEBI:58608"/>
        <dbReference type="EC" id="2.3.1.51"/>
    </reaction>
    <physiologicalReaction direction="left-to-right" evidence="5">
        <dbReference type="Rhea" id="RHEA:19710"/>
    </physiologicalReaction>
</comment>
<comment type="pathway">
    <text evidence="5">Phospholipid metabolism; CDP-diacylglycerol biosynthesis; CDP-diacylglycerol from sn-glycerol 3-phosphate: step 2/3.</text>
</comment>
<comment type="subcellular location">
    <subcellularLocation>
        <location evidence="3">Plastid</location>
        <location evidence="3">Chloroplast membrane</location>
        <topology evidence="2">Multi-pass membrane protein</topology>
    </subcellularLocation>
</comment>
<comment type="tissue specificity">
    <text evidence="3">Widely expressed.</text>
</comment>
<comment type="domain">
    <text evidence="1">The HXXXXD motif is essential for acyltransferase activity and may constitute the binding site for the phosphate moiety of the glycerol-3-phosphate.</text>
</comment>
<comment type="similarity">
    <text evidence="5">Belongs to the 1-acyl-sn-glycerol-3-phosphate acyltransferase family.</text>
</comment>
<comment type="sequence caution" evidence="5">
    <conflict type="erroneous initiation">
        <sequence resource="EMBL-CDS" id="CDY39220"/>
    </conflict>
    <text>Extended N-terminus.</text>
</comment>
<keyword id="KW-0012">Acyltransferase</keyword>
<keyword id="KW-0150">Chloroplast</keyword>
<keyword id="KW-0444">Lipid biosynthesis</keyword>
<keyword id="KW-0443">Lipid metabolism</keyword>
<keyword id="KW-0472">Membrane</keyword>
<keyword id="KW-0594">Phospholipid biosynthesis</keyword>
<keyword id="KW-1208">Phospholipid metabolism</keyword>
<keyword id="KW-0934">Plastid</keyword>
<keyword id="KW-1185">Reference proteome</keyword>
<keyword id="KW-0808">Transferase</keyword>
<keyword id="KW-0809">Transit peptide</keyword>
<keyword id="KW-0812">Transmembrane</keyword>
<keyword id="KW-1133">Transmembrane helix</keyword>
<protein>
    <recommendedName>
        <fullName evidence="5">1-acyl-sn-glycerol-3-phosphate acyltransferase BAT2, chloroplastic</fullName>
        <ecNumber evidence="3">2.3.1.51</ecNumber>
        <ecNumber evidence="3">2.3.1.n4</ecNumber>
    </recommendedName>
    <alternativeName>
        <fullName evidence="5">Lysophosphatidyl acyltransferase 1</fullName>
    </alternativeName>
    <alternativeName>
        <fullName evidence="4">Protein BRASSICA ACYLTRANSFERASE 2</fullName>
    </alternativeName>
</protein>
<sequence>MDVASAPGVSSHPPYYSKPICSSQSSLIRIPINKGCCFARSSNLITSLHAASRGVTRRTSGVQWCYRSIRFDPFKVNDKNSRTVTVRSDLSGAATPESTYPEPEIKLSSRLRGICFCLVAGVSAIVLIVLMITGHPFVLLFDRYRRKFHHFIAKLWASISIYPFYKTDIQGLENLPSSDTPCVYVSNHQSFLDIYTLLSLGQSYKFISKTGIFVIPVIGWAMSMMGVVPLKRMDPRSQVDCLKRCMELVKKGASVFFFPEGTRSKDGRLGPFKKGAFTIAAKTGVPVVPITLMGTGKIMPTGSEGILNHGDVRVIIHKPIYGSKADLLCDEARNKIAESMNLVS</sequence>
<reference key="1">
    <citation type="journal article" date="1999" name="Plant Physiol.">
        <title>A plastidial lysophosphatidic acid acyltransferase from oilseed rape.</title>
        <authorList>
            <person name="Bourgis F."/>
            <person name="Kader J.-C."/>
            <person name="Barret P."/>
            <person name="Renard M."/>
            <person name="Robinson D."/>
            <person name="Robinson C."/>
            <person name="Delseny M."/>
            <person name="Roscoe T.J."/>
        </authorList>
    </citation>
    <scope>NUCLEOTIDE SEQUENCE [MRNA]</scope>
    <scope>FUNCTION</scope>
    <scope>CATALYTIC ACTIVITY</scope>
    <scope>SUBCELLULAR LOCATION</scope>
    <scope>TISSUE SPECIFICITY</scope>
</reference>
<reference key="2">
    <citation type="submission" date="2010-07" db="EMBL/GenBank/DDBJ databases">
        <title>Brassica napus lysophosphatidic acid acyltransferase (ACT2) mRNA.</title>
        <authorList>
            <person name="Yin Y."/>
            <person name="Liu J."/>
            <person name="Li M."/>
        </authorList>
    </citation>
    <scope>NUCLEOTIDE SEQUENCE [MRNA]</scope>
</reference>
<reference key="3">
    <citation type="journal article" date="2014" name="Science">
        <title>Plant genetics. Early allopolyploid evolution in the post-Neolithic Brassica napus oilseed genome.</title>
        <authorList>
            <person name="Chalhoub B."/>
            <person name="Denoeud F."/>
            <person name="Liu S."/>
            <person name="Parkin I.A."/>
            <person name="Tang H."/>
            <person name="Wang X."/>
            <person name="Chiquet J."/>
            <person name="Belcram H."/>
            <person name="Tong C."/>
            <person name="Samans B."/>
            <person name="Correa M."/>
            <person name="Da Silva C."/>
            <person name="Just J."/>
            <person name="Falentin C."/>
            <person name="Koh C.S."/>
            <person name="Le Clainche I."/>
            <person name="Bernard M."/>
            <person name="Bento P."/>
            <person name="Noel B."/>
            <person name="Labadie K."/>
            <person name="Alberti A."/>
            <person name="Charles M."/>
            <person name="Arnaud D."/>
            <person name="Guo H."/>
            <person name="Daviaud C."/>
            <person name="Alamery S."/>
            <person name="Jabbari K."/>
            <person name="Zhao M."/>
            <person name="Edger P.P."/>
            <person name="Chelaifa H."/>
            <person name="Tack D."/>
            <person name="Lassalle G."/>
            <person name="Mestiri I."/>
            <person name="Schnel N."/>
            <person name="Le Paslier M.C."/>
            <person name="Fan G."/>
            <person name="Renault V."/>
            <person name="Bayer P.E."/>
            <person name="Golicz A.A."/>
            <person name="Manoli S."/>
            <person name="Lee T.H."/>
            <person name="Thi V.H."/>
            <person name="Chalabi S."/>
            <person name="Hu Q."/>
            <person name="Fan C."/>
            <person name="Tollenaere R."/>
            <person name="Lu Y."/>
            <person name="Battail C."/>
            <person name="Shen J."/>
            <person name="Sidebottom C.H."/>
            <person name="Wang X."/>
            <person name="Canaguier A."/>
            <person name="Chauveau A."/>
            <person name="Berard A."/>
            <person name="Deniot G."/>
            <person name="Guan M."/>
            <person name="Liu Z."/>
            <person name="Sun F."/>
            <person name="Lim Y.P."/>
            <person name="Lyons E."/>
            <person name="Town C.D."/>
            <person name="Bancroft I."/>
            <person name="Wang X."/>
            <person name="Meng J."/>
            <person name="Ma J."/>
            <person name="Pires J.C."/>
            <person name="King G.J."/>
            <person name="Brunel D."/>
            <person name="Delourme R."/>
            <person name="Renard M."/>
            <person name="Aury J.M."/>
            <person name="Adams K.L."/>
            <person name="Batley J."/>
            <person name="Snowdon R.J."/>
            <person name="Tost J."/>
            <person name="Edwards D."/>
            <person name="Zhou Y."/>
            <person name="Hua W."/>
            <person name="Sharpe A.G."/>
            <person name="Paterson A.H."/>
            <person name="Guan C."/>
            <person name="Wincker P."/>
        </authorList>
    </citation>
    <scope>NUCLEOTIDE SEQUENCE [LARGE SCALE GENOMIC DNA]</scope>
    <source>
        <strain>cv. Darmor-bzh</strain>
    </source>
</reference>